<comment type="function">
    <text evidence="1">Catalyzes the attachment of proline to tRNA(Pro) in a two-step reaction: proline is first activated by ATP to form Pro-AMP and then transferred to the acceptor end of tRNA(Pro).</text>
</comment>
<comment type="catalytic activity">
    <reaction evidence="1">
        <text>tRNA(Pro) + L-proline + ATP = L-prolyl-tRNA(Pro) + AMP + diphosphate</text>
        <dbReference type="Rhea" id="RHEA:14305"/>
        <dbReference type="Rhea" id="RHEA-COMP:9700"/>
        <dbReference type="Rhea" id="RHEA-COMP:9702"/>
        <dbReference type="ChEBI" id="CHEBI:30616"/>
        <dbReference type="ChEBI" id="CHEBI:33019"/>
        <dbReference type="ChEBI" id="CHEBI:60039"/>
        <dbReference type="ChEBI" id="CHEBI:78442"/>
        <dbReference type="ChEBI" id="CHEBI:78532"/>
        <dbReference type="ChEBI" id="CHEBI:456215"/>
        <dbReference type="EC" id="6.1.1.15"/>
    </reaction>
</comment>
<comment type="subunit">
    <text evidence="1">Homodimer.</text>
</comment>
<comment type="subcellular location">
    <subcellularLocation>
        <location evidence="1">Cytoplasm</location>
    </subcellularLocation>
</comment>
<comment type="similarity">
    <text evidence="1">Belongs to the class-II aminoacyl-tRNA synthetase family. ProS type 2 subfamily.</text>
</comment>
<feature type="chain" id="PRO_0000248887" description="Proline--tRNA ligase">
    <location>
        <begin position="1"/>
        <end position="425"/>
    </location>
</feature>
<reference key="1">
    <citation type="journal article" date="2005" name="Proc. Natl. Acad. Sci. U.S.A.">
        <title>Complete genome sequencing of Anaplasma marginale reveals that the surface is skewed to two superfamilies of outer membrane proteins.</title>
        <authorList>
            <person name="Brayton K.A."/>
            <person name="Kappmeyer L.S."/>
            <person name="Herndon D.R."/>
            <person name="Dark M.J."/>
            <person name="Tibbals D.L."/>
            <person name="Palmer G.H."/>
            <person name="McGuire T.C."/>
            <person name="Knowles D.P. Jr."/>
        </authorList>
    </citation>
    <scope>NUCLEOTIDE SEQUENCE [LARGE SCALE GENOMIC DNA]</scope>
    <source>
        <strain>St. Maries</strain>
    </source>
</reference>
<sequence length="425" mass="47664">MRLSECYVPTMKDVSSDVVVASHKYSLRAGLVRQNASGLYTWLPLGLKVLRTIERIVREEMDSSGFLEILMPSVQPADLWRESLRYDSYGPEMLRMQDRSGREMVFGPTHEEAISDVVRSSLKSYRDLPINLYQIQWKFRDELRPRHGIMRGREFLMKDAYSFDVDFEGVMRSYENVFSAYFRIFRRLGLVPIAAKADSGAIGGSISHEFHVLVPTGESTVYHDKKALDLSKNDYCTTEEIASVYAATEDAHDPQNCGVDPNDLQVSKGIEVAHVFYLGDRYSAPMNVKFHDKDGNSAHALMGCYGIGISRLVAAIIEVFHDDVGIRWPESIAPFKVGIVNLLTTNEDCKTTAETIYAALADSSLYDDSTDSPGVKLARMDLLGMPWQVIIGNSFVKDKVVELKNRANGATERCTVDALIARMQA</sequence>
<name>SYP_ANAMM</name>
<evidence type="ECO:0000255" key="1">
    <source>
        <dbReference type="HAMAP-Rule" id="MF_01570"/>
    </source>
</evidence>
<organism>
    <name type="scientific">Anaplasma marginale (strain St. Maries)</name>
    <dbReference type="NCBI Taxonomy" id="234826"/>
    <lineage>
        <taxon>Bacteria</taxon>
        <taxon>Pseudomonadati</taxon>
        <taxon>Pseudomonadota</taxon>
        <taxon>Alphaproteobacteria</taxon>
        <taxon>Rickettsiales</taxon>
        <taxon>Anaplasmataceae</taxon>
        <taxon>Anaplasma</taxon>
    </lineage>
</organism>
<dbReference type="EC" id="6.1.1.15" evidence="1"/>
<dbReference type="EMBL" id="CP000030">
    <property type="protein sequence ID" value="AAV86535.1"/>
    <property type="molecule type" value="Genomic_DNA"/>
</dbReference>
<dbReference type="RefSeq" id="WP_011114305.1">
    <property type="nucleotide sequence ID" value="NC_004842.2"/>
</dbReference>
<dbReference type="SMR" id="Q5PAZ5"/>
<dbReference type="KEGG" id="ama:AM507"/>
<dbReference type="HOGENOM" id="CLU_016739_4_2_5"/>
<dbReference type="GO" id="GO:0005829">
    <property type="term" value="C:cytosol"/>
    <property type="evidence" value="ECO:0007669"/>
    <property type="project" value="TreeGrafter"/>
</dbReference>
<dbReference type="GO" id="GO:0005524">
    <property type="term" value="F:ATP binding"/>
    <property type="evidence" value="ECO:0007669"/>
    <property type="project" value="UniProtKB-UniRule"/>
</dbReference>
<dbReference type="GO" id="GO:0004827">
    <property type="term" value="F:proline-tRNA ligase activity"/>
    <property type="evidence" value="ECO:0007669"/>
    <property type="project" value="UniProtKB-UniRule"/>
</dbReference>
<dbReference type="GO" id="GO:0006433">
    <property type="term" value="P:prolyl-tRNA aminoacylation"/>
    <property type="evidence" value="ECO:0007669"/>
    <property type="project" value="UniProtKB-UniRule"/>
</dbReference>
<dbReference type="CDD" id="cd00861">
    <property type="entry name" value="ProRS_anticodon_short"/>
    <property type="match status" value="1"/>
</dbReference>
<dbReference type="CDD" id="cd00779">
    <property type="entry name" value="ProRS_core_prok"/>
    <property type="match status" value="1"/>
</dbReference>
<dbReference type="FunFam" id="3.30.930.10:FF:000042">
    <property type="entry name" value="probable proline--tRNA ligase, mitochondrial"/>
    <property type="match status" value="1"/>
</dbReference>
<dbReference type="Gene3D" id="3.40.50.800">
    <property type="entry name" value="Anticodon-binding domain"/>
    <property type="match status" value="1"/>
</dbReference>
<dbReference type="Gene3D" id="3.30.930.10">
    <property type="entry name" value="Bira Bifunctional Protein, Domain 2"/>
    <property type="match status" value="1"/>
</dbReference>
<dbReference type="HAMAP" id="MF_01570">
    <property type="entry name" value="Pro_tRNA_synth_type2"/>
    <property type="match status" value="1"/>
</dbReference>
<dbReference type="InterPro" id="IPR002314">
    <property type="entry name" value="aa-tRNA-synt_IIb"/>
</dbReference>
<dbReference type="InterPro" id="IPR006195">
    <property type="entry name" value="aa-tRNA-synth_II"/>
</dbReference>
<dbReference type="InterPro" id="IPR045864">
    <property type="entry name" value="aa-tRNA-synth_II/BPL/LPL"/>
</dbReference>
<dbReference type="InterPro" id="IPR004154">
    <property type="entry name" value="Anticodon-bd"/>
</dbReference>
<dbReference type="InterPro" id="IPR036621">
    <property type="entry name" value="Anticodon-bd_dom_sf"/>
</dbReference>
<dbReference type="InterPro" id="IPR002316">
    <property type="entry name" value="Pro-tRNA-ligase_IIa"/>
</dbReference>
<dbReference type="InterPro" id="IPR004500">
    <property type="entry name" value="Pro-tRNA-synth_IIa_bac-type"/>
</dbReference>
<dbReference type="InterPro" id="IPR050062">
    <property type="entry name" value="Pro-tRNA_synthetase"/>
</dbReference>
<dbReference type="InterPro" id="IPR023716">
    <property type="entry name" value="Prolyl-tRNA_ligase_IIa_type2"/>
</dbReference>
<dbReference type="InterPro" id="IPR044140">
    <property type="entry name" value="ProRS_anticodon_short"/>
</dbReference>
<dbReference type="InterPro" id="IPR033730">
    <property type="entry name" value="ProRS_core_prok"/>
</dbReference>
<dbReference type="NCBIfam" id="NF008979">
    <property type="entry name" value="PRK12325.1"/>
    <property type="match status" value="1"/>
</dbReference>
<dbReference type="NCBIfam" id="TIGR00409">
    <property type="entry name" value="proS_fam_II"/>
    <property type="match status" value="1"/>
</dbReference>
<dbReference type="PANTHER" id="PTHR42753">
    <property type="entry name" value="MITOCHONDRIAL RIBOSOME PROTEIN L39/PROLYL-TRNA LIGASE FAMILY MEMBER"/>
    <property type="match status" value="1"/>
</dbReference>
<dbReference type="PANTHER" id="PTHR42753:SF2">
    <property type="entry name" value="PROLINE--TRNA LIGASE"/>
    <property type="match status" value="1"/>
</dbReference>
<dbReference type="Pfam" id="PF03129">
    <property type="entry name" value="HGTP_anticodon"/>
    <property type="match status" value="1"/>
</dbReference>
<dbReference type="Pfam" id="PF00587">
    <property type="entry name" value="tRNA-synt_2b"/>
    <property type="match status" value="1"/>
</dbReference>
<dbReference type="PRINTS" id="PR01046">
    <property type="entry name" value="TRNASYNTHPRO"/>
</dbReference>
<dbReference type="SUPFAM" id="SSF52954">
    <property type="entry name" value="Class II aaRS ABD-related"/>
    <property type="match status" value="1"/>
</dbReference>
<dbReference type="SUPFAM" id="SSF55681">
    <property type="entry name" value="Class II aaRS and biotin synthetases"/>
    <property type="match status" value="1"/>
</dbReference>
<dbReference type="PROSITE" id="PS50862">
    <property type="entry name" value="AA_TRNA_LIGASE_II"/>
    <property type="match status" value="1"/>
</dbReference>
<keyword id="KW-0030">Aminoacyl-tRNA synthetase</keyword>
<keyword id="KW-0067">ATP-binding</keyword>
<keyword id="KW-0963">Cytoplasm</keyword>
<keyword id="KW-0436">Ligase</keyword>
<keyword id="KW-0547">Nucleotide-binding</keyword>
<keyword id="KW-0648">Protein biosynthesis</keyword>
<protein>
    <recommendedName>
        <fullName evidence="1">Proline--tRNA ligase</fullName>
        <ecNumber evidence="1">6.1.1.15</ecNumber>
    </recommendedName>
    <alternativeName>
        <fullName evidence="1">Prolyl-tRNA synthetase</fullName>
        <shortName evidence="1">ProRS</shortName>
    </alternativeName>
</protein>
<gene>
    <name evidence="1" type="primary">proS</name>
    <name type="ordered locus">AM507</name>
</gene>
<proteinExistence type="inferred from homology"/>
<accession>Q5PAZ5</accession>